<accession>A7RFL3</accession>
<keyword id="KW-0903">Direct protein sequencing</keyword>
<keyword id="KW-1015">Disulfide bond</keyword>
<keyword id="KW-0527">Neuropeptide</keyword>
<keyword id="KW-1185">Reference proteome</keyword>
<keyword id="KW-0732">Signal</keyword>
<protein>
    <recommendedName>
        <fullName evidence="4">Protein Aeq5-like1</fullName>
    </recommendedName>
</protein>
<dbReference type="EMBL" id="DS469508">
    <property type="protein sequence ID" value="EDO49621.1"/>
    <property type="status" value="ALT_INIT"/>
    <property type="molecule type" value="Genomic_DNA"/>
</dbReference>
<dbReference type="RefSeq" id="XP_001641684.1">
    <property type="nucleotide sequence ID" value="XM_001641634.1"/>
</dbReference>
<dbReference type="SMR" id="A7RFL3"/>
<dbReference type="EnsemblMetazoa" id="EDO49621">
    <property type="protein sequence ID" value="EDO49621"/>
    <property type="gene ID" value="NEMVEDRAFT_v1g237880"/>
</dbReference>
<dbReference type="HOGENOM" id="CLU_1724469_0_0_1"/>
<dbReference type="InParanoid" id="A7RFL3"/>
<dbReference type="Proteomes" id="UP000001593">
    <property type="component" value="Unassembled WGS sequence"/>
</dbReference>
<dbReference type="GO" id="GO:0007218">
    <property type="term" value="P:neuropeptide signaling pathway"/>
    <property type="evidence" value="ECO:0007669"/>
    <property type="project" value="UniProtKB-KW"/>
</dbReference>
<sequence>MKSVIAVLVLSLVLVNFTQAAKDDRWKACRMKCYTESKLCMNNDSKCFDSQSCNSCIQQVYSPCFNRCQEMLRRREAFKRMFAFDEEN</sequence>
<gene>
    <name evidence="7" type="ORF">v1g237880</name>
</gene>
<comment type="function">
    <text evidence="6">Probable neuropeptide.</text>
</comment>
<comment type="tissue specificity">
    <text evidence="3">Is expressed in the ectodermal cells of gastrulae and planulae. Is also noticeable in the endoderm in late planulae. In the primary polyps, is expressed in both ectoderm (sensory neurons) and endoderm (ganglions). Is not expressed in nematocytes.</text>
</comment>
<comment type="developmental stage">
    <text evidence="3">Is strongly and equally detected in planulae, in primary polyps (9d), and in both adult females and males (at protein level) (PubMed:33060291). Transcripts are expressed early in development in ectodermal cells of the gastrula, then increases in early planula and by the late planula spreads in expression to endodermal cells. In primary polyps, they are expressed in ectodermal sensory cells and multiple endodermal ganglion cells that send their processes in different directions all around the body (PubMed:33060291).</text>
</comment>
<comment type="sequence caution" evidence="5">
    <conflict type="erroneous initiation">
        <sequence resource="EMBL-CDS" id="EDO49621"/>
    </conflict>
    <text>Extended N-terminus.</text>
</comment>
<proteinExistence type="evidence at protein level"/>
<name>AEQL1_NEMVE</name>
<feature type="signal peptide" evidence="2">
    <location>
        <begin position="1"/>
        <end position="20"/>
    </location>
</feature>
<feature type="chain" id="PRO_0000453918" description="Protein Aeq5-like1" evidence="6">
    <location>
        <begin position="21"/>
        <end position="88"/>
    </location>
</feature>
<feature type="disulfide bond" evidence="1">
    <location>
        <begin position="29"/>
        <end position="68"/>
    </location>
</feature>
<feature type="disulfide bond" evidence="1">
    <location>
        <begin position="33"/>
        <end position="64"/>
    </location>
</feature>
<feature type="disulfide bond" evidence="1">
    <location>
        <begin position="40"/>
        <end position="56"/>
    </location>
</feature>
<feature type="disulfide bond" evidence="1">
    <location>
        <begin position="47"/>
        <end position="53"/>
    </location>
</feature>
<reference evidence="7 8" key="1">
    <citation type="journal article" date="2007" name="Science">
        <title>Sea anemone genome reveals ancestral eumetazoan gene repertoire and genomic organization.</title>
        <authorList>
            <person name="Putnam N.H."/>
            <person name="Srivastava M."/>
            <person name="Hellsten U."/>
            <person name="Dirks B."/>
            <person name="Chapman J."/>
            <person name="Salamov A."/>
            <person name="Terry A."/>
            <person name="Shapiro H."/>
            <person name="Lindquist E."/>
            <person name="Kapitonov V.V."/>
            <person name="Jurka J."/>
            <person name="Genikhovich G."/>
            <person name="Grigoriev I.V."/>
            <person name="Lucas S.M."/>
            <person name="Steele R.E."/>
            <person name="Finnerty J.R."/>
            <person name="Technau U."/>
            <person name="Martindale M.Q."/>
            <person name="Rokhsar D.S."/>
        </authorList>
    </citation>
    <scope>NUCLEOTIDE SEQUENCE [LARGE SCALE GENOMIC DNA]</scope>
    <source>
        <strain evidence="8">CH2 X CH6</strain>
    </source>
</reference>
<reference key="2">
    <citation type="journal article" date="2020" name="Proc. Natl. Acad. Sci. U.S.A.">
        <title>Toxin-like neuropeptides in the sea anemone Nematostella unravel recruitment from the nervous system to venom.</title>
        <authorList>
            <person name="Sachkova M.Y."/>
            <person name="Landau M."/>
            <person name="Surm J.M."/>
            <person name="Macrander J."/>
            <person name="Singer S.A."/>
            <person name="Reitzel A.M."/>
            <person name="Moran Y."/>
        </authorList>
    </citation>
    <scope>NUCLEOTIDE SEQUENCE [MRNA]</scope>
    <scope>PROTEIN SEQUENCE OF 47-67</scope>
    <scope>IDENTIFICATION BY MASS SPECTROMETRY</scope>
    <scope>TISSUE SPECIFICITY</scope>
</reference>
<evidence type="ECO:0000250" key="1">
    <source>
        <dbReference type="UniProtKB" id="Q3C258"/>
    </source>
</evidence>
<evidence type="ECO:0000255" key="2"/>
<evidence type="ECO:0000269" key="3">
    <source>
    </source>
</evidence>
<evidence type="ECO:0000303" key="4">
    <source>
    </source>
</evidence>
<evidence type="ECO:0000305" key="5"/>
<evidence type="ECO:0000305" key="6">
    <source>
    </source>
</evidence>
<evidence type="ECO:0000312" key="7">
    <source>
        <dbReference type="EMBL" id="EDO49621.1"/>
    </source>
</evidence>
<evidence type="ECO:0000312" key="8">
    <source>
        <dbReference type="Proteomes" id="UP000001593"/>
    </source>
</evidence>
<organism>
    <name type="scientific">Nematostella vectensis</name>
    <name type="common">Starlet sea anemone</name>
    <dbReference type="NCBI Taxonomy" id="45351"/>
    <lineage>
        <taxon>Eukaryota</taxon>
        <taxon>Metazoa</taxon>
        <taxon>Cnidaria</taxon>
        <taxon>Anthozoa</taxon>
        <taxon>Hexacorallia</taxon>
        <taxon>Actiniaria</taxon>
        <taxon>Edwardsiidae</taxon>
        <taxon>Nematostella</taxon>
    </lineage>
</organism>